<geneLocation type="chloroplast"/>
<name>YCF3_CHLAT</name>
<dbReference type="EMBL" id="DQ422812">
    <property type="protein sequence ID" value="ABD62261.2"/>
    <property type="molecule type" value="Genomic_DNA"/>
</dbReference>
<dbReference type="RefSeq" id="YP_001019153.1">
    <property type="nucleotide sequence ID" value="NC_008822.1"/>
</dbReference>
<dbReference type="SMR" id="Q19V63"/>
<dbReference type="GeneID" id="4783204"/>
<dbReference type="GO" id="GO:0009535">
    <property type="term" value="C:chloroplast thylakoid membrane"/>
    <property type="evidence" value="ECO:0007669"/>
    <property type="project" value="UniProtKB-SubCell"/>
</dbReference>
<dbReference type="GO" id="GO:0015979">
    <property type="term" value="P:photosynthesis"/>
    <property type="evidence" value="ECO:0007669"/>
    <property type="project" value="UniProtKB-UniRule"/>
</dbReference>
<dbReference type="Gene3D" id="1.25.40.10">
    <property type="entry name" value="Tetratricopeptide repeat domain"/>
    <property type="match status" value="1"/>
</dbReference>
<dbReference type="HAMAP" id="MF_00439">
    <property type="entry name" value="Ycf3"/>
    <property type="match status" value="1"/>
</dbReference>
<dbReference type="InterPro" id="IPR022818">
    <property type="entry name" value="PSI_Ycf3_assembly"/>
</dbReference>
<dbReference type="InterPro" id="IPR011990">
    <property type="entry name" value="TPR-like_helical_dom_sf"/>
</dbReference>
<dbReference type="InterPro" id="IPR019734">
    <property type="entry name" value="TPR_rpt"/>
</dbReference>
<dbReference type="NCBIfam" id="NF002725">
    <property type="entry name" value="PRK02603.1"/>
    <property type="match status" value="1"/>
</dbReference>
<dbReference type="Pfam" id="PF00515">
    <property type="entry name" value="TPR_1"/>
    <property type="match status" value="1"/>
</dbReference>
<dbReference type="SMART" id="SM00028">
    <property type="entry name" value="TPR"/>
    <property type="match status" value="3"/>
</dbReference>
<dbReference type="SUPFAM" id="SSF48452">
    <property type="entry name" value="TPR-like"/>
    <property type="match status" value="1"/>
</dbReference>
<dbReference type="PROSITE" id="PS50005">
    <property type="entry name" value="TPR"/>
    <property type="match status" value="3"/>
</dbReference>
<dbReference type="PROSITE" id="PS50293">
    <property type="entry name" value="TPR_REGION"/>
    <property type="match status" value="1"/>
</dbReference>
<feature type="chain" id="PRO_0000325055" description="Photosystem I assembly protein Ycf3">
    <location>
        <begin position="1"/>
        <end position="167"/>
    </location>
</feature>
<feature type="repeat" description="TPR 1">
    <location>
        <begin position="35"/>
        <end position="68"/>
    </location>
</feature>
<feature type="repeat" description="TPR 2">
    <location>
        <begin position="72"/>
        <end position="105"/>
    </location>
</feature>
<feature type="repeat" description="TPR 3">
    <location>
        <begin position="120"/>
        <end position="153"/>
    </location>
</feature>
<accession>Q19V63</accession>
<proteinExistence type="inferred from homology"/>
<gene>
    <name evidence="1" type="primary">ycf3</name>
</gene>
<keyword id="KW-0150">Chloroplast</keyword>
<keyword id="KW-0472">Membrane</keyword>
<keyword id="KW-0602">Photosynthesis</keyword>
<keyword id="KW-0934">Plastid</keyword>
<keyword id="KW-0677">Repeat</keyword>
<keyword id="KW-0793">Thylakoid</keyword>
<keyword id="KW-0802">TPR repeat</keyword>
<sequence>MPRSQRNDNFIDKTFTVVADILLKILPTTGREKEAFAYYRDGMSAQAEGEYAEALQNYYEAMRLEVDAYDRSYILYNIGLIHTSNGEHAKALEYYYQAIERNPSLPQALNNIAVIYHYRGEQAIEEGNSEAAEILFDQAASYWKQAIRLAPTSYIEAQNWLKLTGRI</sequence>
<comment type="function">
    <text evidence="1">Essential for the assembly of the photosystem I (PSI) complex. May act as a chaperone-like factor to guide the assembly of the PSI subunits.</text>
</comment>
<comment type="subcellular location">
    <subcellularLocation>
        <location evidence="1">Plastid</location>
        <location evidence="1">Chloroplast thylakoid membrane</location>
        <topology evidence="1">Peripheral membrane protein</topology>
    </subcellularLocation>
</comment>
<comment type="similarity">
    <text evidence="1">Belongs to the Ycf3 family.</text>
</comment>
<protein>
    <recommendedName>
        <fullName evidence="1">Photosystem I assembly protein Ycf3</fullName>
    </recommendedName>
</protein>
<reference key="1">
    <citation type="journal article" date="2007" name="BMC Biol.">
        <title>A clade uniting the green algae Mesostigma viride and Chlorokybus atmophyticus represents the deepest branch of the Streptophyta in chloroplast genome-based phylogenies.</title>
        <authorList>
            <person name="Lemieux C."/>
            <person name="Otis C."/>
            <person name="Turmel M."/>
        </authorList>
    </citation>
    <scope>NUCLEOTIDE SEQUENCE [LARGE SCALE GENOMIC DNA]</scope>
    <source>
        <strain>SAG 48.80</strain>
    </source>
</reference>
<organism>
    <name type="scientific">Chlorokybus atmophyticus</name>
    <name type="common">Soil alga</name>
    <dbReference type="NCBI Taxonomy" id="3144"/>
    <lineage>
        <taxon>Eukaryota</taxon>
        <taxon>Viridiplantae</taxon>
        <taxon>Streptophyta</taxon>
        <taxon>Chlorokybophyceae</taxon>
        <taxon>Chlorokybales</taxon>
        <taxon>Chlorokybaceae</taxon>
        <taxon>Chlorokybus</taxon>
    </lineage>
</organism>
<evidence type="ECO:0000255" key="1">
    <source>
        <dbReference type="HAMAP-Rule" id="MF_00439"/>
    </source>
</evidence>